<proteinExistence type="evidence at transcript level"/>
<name>CXA1_BOVIN</name>
<reference key="1">
    <citation type="journal article" date="1990" name="J. Biol. Chem.">
        <title>Cloning of a gap junctional protein from vascular smooth muscle and expression in two-cell mouse embryos.</title>
        <authorList>
            <person name="Lash J.A."/>
            <person name="Critser E.S."/>
            <person name="Pressler M.L."/>
        </authorList>
    </citation>
    <scope>NUCLEOTIDE SEQUENCE [MRNA]</scope>
</reference>
<reference key="2">
    <citation type="submission" date="2005-09" db="EMBL/GenBank/DDBJ databases">
        <authorList>
            <consortium name="NIH - Mammalian Gene Collection (MGC) project"/>
        </authorList>
    </citation>
    <scope>NUCLEOTIDE SEQUENCE [LARGE SCALE MRNA]</scope>
    <source>
        <strain>Hereford</strain>
        <tissue>Thymus</tissue>
    </source>
</reference>
<organism>
    <name type="scientific">Bos taurus</name>
    <name type="common">Bovine</name>
    <dbReference type="NCBI Taxonomy" id="9913"/>
    <lineage>
        <taxon>Eukaryota</taxon>
        <taxon>Metazoa</taxon>
        <taxon>Chordata</taxon>
        <taxon>Craniata</taxon>
        <taxon>Vertebrata</taxon>
        <taxon>Euteleostomi</taxon>
        <taxon>Mammalia</taxon>
        <taxon>Eutheria</taxon>
        <taxon>Laurasiatheria</taxon>
        <taxon>Artiodactyla</taxon>
        <taxon>Ruminantia</taxon>
        <taxon>Pecora</taxon>
        <taxon>Bovidae</taxon>
        <taxon>Bovinae</taxon>
        <taxon>Bos</taxon>
    </lineage>
</organism>
<keyword id="KW-0007">Acetylation</keyword>
<keyword id="KW-0965">Cell junction</keyword>
<keyword id="KW-1003">Cell membrane</keyword>
<keyword id="KW-1015">Disulfide bond</keyword>
<keyword id="KW-0256">Endoplasmic reticulum</keyword>
<keyword id="KW-0303">Gap junction</keyword>
<keyword id="KW-1017">Isopeptide bond</keyword>
<keyword id="KW-0472">Membrane</keyword>
<keyword id="KW-0597">Phosphoprotein</keyword>
<keyword id="KW-1185">Reference proteome</keyword>
<keyword id="KW-0702">S-nitrosylation</keyword>
<keyword id="KW-0812">Transmembrane</keyword>
<keyword id="KW-1133">Transmembrane helix</keyword>
<keyword id="KW-0832">Ubl conjugation</keyword>
<comment type="function">
    <text evidence="1 3">Gap junction protein that acts as a regulator of bladder capacity. A gap junction consists of a cluster of closely packed pairs of transmembrane channels, the connexons, through which materials of low MW diffuse from one cell to a neighboring cell. May play a critical role in the physiology of hearing by participating in the recycling of potassium to the cochlear endolymph. Negative regulator of bladder functional capacity: acts by enhancing intercellular electrical and chemical transmission, thus sensitizing bladder muscles to cholinergic neural stimuli and causing them to contract. May play a role in cell growth inhibition through the regulation of NOV expression and localization. Plays an essential role in gap junction communication in the ventricles (By similarity).</text>
</comment>
<comment type="subunit">
    <text evidence="1 2 3">A connexon is composed of a hexamer of connexins. Interacts with SGSM3 (By similarity). Interacts with RIC1/CIP150 (By similarity). Interacts with CNST and CSNK1D (By similarity). Interacts (via C-terminus) with TJP1. Interacts (via C-terminus) with SRC (via SH3 domain). Interacts (not ubiquitinated) with UBQLN4 (via UBA domain) (By similarity). Interacts with NOV. Interacts with TMEM65 (By similarity). Interacts with ANK3/ANKG and PKP2 (By similarity).</text>
</comment>
<comment type="subcellular location">
    <subcellularLocation>
        <location evidence="2">Cell membrane</location>
        <topology evidence="5">Multi-pass membrane protein</topology>
    </subcellularLocation>
    <subcellularLocation>
        <location evidence="2">Cell junction</location>
        <location evidence="2">Gap junction</location>
    </subcellularLocation>
    <subcellularLocation>
        <location evidence="3">Endoplasmic reticulum</location>
    </subcellularLocation>
    <text evidence="3">Localizes at the intercalated disk (ICD) in cardiomyocytes and proper localization at ICD is dependent on TMEM65.</text>
</comment>
<comment type="PTM">
    <text evidence="1 2 4">Phosphorylation at Ser-326, Ser-329 and Ser-331 by CK1 modulates gap junction assembly. Phosphorylated at Ser-369 by PRKCG; phosphorylation induces disassembly of gap junction plaques and inhibition of gap junction activity. Phosphorylation at Ser-369 by PRKCD triggers its internalization into small vesicles leading to proteasome-mediated degradation (By similarity).</text>
</comment>
<comment type="PTM">
    <text evidence="2">Sumoylated with SUMO1, SUMO2 and SUMO3, which may regulate the level of functional Cx43 gap junctions at the plasma membrane. May be desumoylated by SENP1 or SENP2 (By similarity).</text>
</comment>
<comment type="PTM">
    <text evidence="3">Acetylated in the developing cortex; leading to delocalization from the cell membrane.</text>
</comment>
<comment type="similarity">
    <text evidence="7">Belongs to the connexin family. Alpha-type (group II) subfamily.</text>
</comment>
<dbReference type="EMBL" id="J05535">
    <property type="protein sequence ID" value="AAA30459.1"/>
    <property type="molecule type" value="mRNA"/>
</dbReference>
<dbReference type="EMBL" id="BC105464">
    <property type="protein sequence ID" value="AAI05465.1"/>
    <property type="molecule type" value="mRNA"/>
</dbReference>
<dbReference type="PIR" id="A36623">
    <property type="entry name" value="A36623"/>
</dbReference>
<dbReference type="RefSeq" id="NP_776493.1">
    <property type="nucleotide sequence ID" value="NM_174068.2"/>
</dbReference>
<dbReference type="SMR" id="P18246"/>
<dbReference type="FunCoup" id="P18246">
    <property type="interactions" value="350"/>
</dbReference>
<dbReference type="STRING" id="9913.ENSBTAP00000002398"/>
<dbReference type="iPTMnet" id="P18246"/>
<dbReference type="PaxDb" id="9913-ENSBTAP00000002398"/>
<dbReference type="PeptideAtlas" id="P18246"/>
<dbReference type="Ensembl" id="ENSBTAT00000002398.7">
    <property type="protein sequence ID" value="ENSBTAP00000002398.5"/>
    <property type="gene ID" value="ENSBTAG00000001835.7"/>
</dbReference>
<dbReference type="Ensembl" id="ENSBTAT00000102239.1">
    <property type="protein sequence ID" value="ENSBTAP00000101372.1"/>
    <property type="gene ID" value="ENSBTAG00000001835.7"/>
</dbReference>
<dbReference type="Ensembl" id="ENSBTAT00000103662.1">
    <property type="protein sequence ID" value="ENSBTAP00000098299.1"/>
    <property type="gene ID" value="ENSBTAG00000001835.7"/>
</dbReference>
<dbReference type="GeneID" id="281193"/>
<dbReference type="KEGG" id="bta:281193"/>
<dbReference type="CTD" id="2697"/>
<dbReference type="VEuPathDB" id="HostDB:ENSBTAG00000001835"/>
<dbReference type="VGNC" id="VGNC:29370">
    <property type="gene designation" value="GJA1"/>
</dbReference>
<dbReference type="eggNOG" id="ENOG502QRAE">
    <property type="taxonomic scope" value="Eukaryota"/>
</dbReference>
<dbReference type="GeneTree" id="ENSGT01090000260070"/>
<dbReference type="HOGENOM" id="CLU_037388_0_0_1"/>
<dbReference type="InParanoid" id="P18246"/>
<dbReference type="OMA" id="FWVLQFI"/>
<dbReference type="OrthoDB" id="8773830at2759"/>
<dbReference type="TreeFam" id="TF329606"/>
<dbReference type="Reactome" id="R-BTA-190840">
    <property type="pathway name" value="Microtubule-dependent trafficking of connexons from Golgi to the plasma membrane"/>
</dbReference>
<dbReference type="Reactome" id="R-BTA-190861">
    <property type="pathway name" value="Gap junction assembly"/>
</dbReference>
<dbReference type="Reactome" id="R-BTA-190873">
    <property type="pathway name" value="Gap junction degradation"/>
</dbReference>
<dbReference type="Reactome" id="R-BTA-191650">
    <property type="pathway name" value="Regulation of gap junction activity"/>
</dbReference>
<dbReference type="Reactome" id="R-BTA-196025">
    <property type="pathway name" value="Formation of annular gap junctions"/>
</dbReference>
<dbReference type="Reactome" id="R-BTA-9013406">
    <property type="pathway name" value="RHOQ GTPase cycle"/>
</dbReference>
<dbReference type="Proteomes" id="UP000009136">
    <property type="component" value="Chromosome 9"/>
</dbReference>
<dbReference type="Bgee" id="ENSBTAG00000001835">
    <property type="expression patterns" value="Expressed in rumen papilla and 100 other cell types or tissues"/>
</dbReference>
<dbReference type="GO" id="GO:0016324">
    <property type="term" value="C:apical plasma membrane"/>
    <property type="evidence" value="ECO:0000250"/>
    <property type="project" value="UniProtKB"/>
</dbReference>
<dbReference type="GO" id="GO:0030054">
    <property type="term" value="C:cell junction"/>
    <property type="evidence" value="ECO:0000250"/>
    <property type="project" value="UniProtKB"/>
</dbReference>
<dbReference type="GO" id="GO:0005922">
    <property type="term" value="C:connexin complex"/>
    <property type="evidence" value="ECO:0000250"/>
    <property type="project" value="AgBase"/>
</dbReference>
<dbReference type="GO" id="GO:0005737">
    <property type="term" value="C:cytoplasm"/>
    <property type="evidence" value="ECO:0000250"/>
    <property type="project" value="AgBase"/>
</dbReference>
<dbReference type="GO" id="GO:0005769">
    <property type="term" value="C:early endosome"/>
    <property type="evidence" value="ECO:0000250"/>
    <property type="project" value="AgBase"/>
</dbReference>
<dbReference type="GO" id="GO:0005783">
    <property type="term" value="C:endoplasmic reticulum"/>
    <property type="evidence" value="ECO:0007669"/>
    <property type="project" value="UniProtKB-SubCell"/>
</dbReference>
<dbReference type="GO" id="GO:0005916">
    <property type="term" value="C:fascia adherens"/>
    <property type="evidence" value="ECO:0000250"/>
    <property type="project" value="AgBase"/>
</dbReference>
<dbReference type="GO" id="GO:0005921">
    <property type="term" value="C:gap junction"/>
    <property type="evidence" value="ECO:0000250"/>
    <property type="project" value="AgBase"/>
</dbReference>
<dbReference type="GO" id="GO:0014704">
    <property type="term" value="C:intercalated disc"/>
    <property type="evidence" value="ECO:0000250"/>
    <property type="project" value="UniProtKB"/>
</dbReference>
<dbReference type="GO" id="GO:0005770">
    <property type="term" value="C:late endosome"/>
    <property type="evidence" value="ECO:0000250"/>
    <property type="project" value="AgBase"/>
</dbReference>
<dbReference type="GO" id="GO:0005764">
    <property type="term" value="C:lysosome"/>
    <property type="evidence" value="ECO:0000250"/>
    <property type="project" value="AgBase"/>
</dbReference>
<dbReference type="GO" id="GO:0005739">
    <property type="term" value="C:mitochondrion"/>
    <property type="evidence" value="ECO:0000250"/>
    <property type="project" value="UniProtKB"/>
</dbReference>
<dbReference type="GO" id="GO:0005771">
    <property type="term" value="C:multivesicular body"/>
    <property type="evidence" value="ECO:0000250"/>
    <property type="project" value="AgBase"/>
</dbReference>
<dbReference type="GO" id="GO:0005654">
    <property type="term" value="C:nucleoplasm"/>
    <property type="evidence" value="ECO:0007669"/>
    <property type="project" value="Ensembl"/>
</dbReference>
<dbReference type="GO" id="GO:0005886">
    <property type="term" value="C:plasma membrane"/>
    <property type="evidence" value="ECO:0000250"/>
    <property type="project" value="UniProtKB"/>
</dbReference>
<dbReference type="GO" id="GO:0070160">
    <property type="term" value="C:tight junction"/>
    <property type="evidence" value="ECO:0007669"/>
    <property type="project" value="Ensembl"/>
</dbReference>
<dbReference type="GO" id="GO:0008013">
    <property type="term" value="F:beta-catenin binding"/>
    <property type="evidence" value="ECO:0007669"/>
    <property type="project" value="Ensembl"/>
</dbReference>
<dbReference type="GO" id="GO:0005243">
    <property type="term" value="F:gap junction channel activity"/>
    <property type="evidence" value="ECO:0000250"/>
    <property type="project" value="AgBase"/>
</dbReference>
<dbReference type="GO" id="GO:1903763">
    <property type="term" value="F:gap junction channel activity involved in cell communication by electrical coupling"/>
    <property type="evidence" value="ECO:0007669"/>
    <property type="project" value="Ensembl"/>
</dbReference>
<dbReference type="GO" id="GO:0055077">
    <property type="term" value="F:gap junction hemi-channel activity"/>
    <property type="evidence" value="ECO:0000250"/>
    <property type="project" value="UniProtKB"/>
</dbReference>
<dbReference type="GO" id="GO:0015075">
    <property type="term" value="F:monoatomic ion transmembrane transporter activity"/>
    <property type="evidence" value="ECO:0007669"/>
    <property type="project" value="Ensembl"/>
</dbReference>
<dbReference type="GO" id="GO:0030165">
    <property type="term" value="F:PDZ domain binding"/>
    <property type="evidence" value="ECO:0000250"/>
    <property type="project" value="AgBase"/>
</dbReference>
<dbReference type="GO" id="GO:0017124">
    <property type="term" value="F:SH3 domain binding"/>
    <property type="evidence" value="ECO:0000250"/>
    <property type="project" value="AgBase"/>
</dbReference>
<dbReference type="GO" id="GO:0015631">
    <property type="term" value="F:tubulin binding"/>
    <property type="evidence" value="ECO:0000250"/>
    <property type="project" value="UniProtKB"/>
</dbReference>
<dbReference type="GO" id="GO:0007512">
    <property type="term" value="P:adult heart development"/>
    <property type="evidence" value="ECO:0000250"/>
    <property type="project" value="AgBase"/>
</dbReference>
<dbReference type="GO" id="GO:0015867">
    <property type="term" value="P:ATP transport"/>
    <property type="evidence" value="ECO:0000250"/>
    <property type="project" value="AgBase"/>
</dbReference>
<dbReference type="GO" id="GO:0048514">
    <property type="term" value="P:blood vessel morphogenesis"/>
    <property type="evidence" value="ECO:0000250"/>
    <property type="project" value="AgBase"/>
</dbReference>
<dbReference type="GO" id="GO:0060348">
    <property type="term" value="P:bone development"/>
    <property type="evidence" value="ECO:0000250"/>
    <property type="project" value="UniProtKB"/>
</dbReference>
<dbReference type="GO" id="GO:0046849">
    <property type="term" value="P:bone remodeling"/>
    <property type="evidence" value="ECO:0000250"/>
    <property type="project" value="UniProtKB"/>
</dbReference>
<dbReference type="GO" id="GO:0007154">
    <property type="term" value="P:cell communication"/>
    <property type="evidence" value="ECO:0000250"/>
    <property type="project" value="AgBase"/>
</dbReference>
<dbReference type="GO" id="GO:0010644">
    <property type="term" value="P:cell communication by electrical coupling"/>
    <property type="evidence" value="ECO:0000318"/>
    <property type="project" value="GO_Central"/>
</dbReference>
<dbReference type="GO" id="GO:0007267">
    <property type="term" value="P:cell-cell signaling"/>
    <property type="evidence" value="ECO:0000250"/>
    <property type="project" value="AgBase"/>
</dbReference>
<dbReference type="GO" id="GO:0035050">
    <property type="term" value="P:embryonic heart tube development"/>
    <property type="evidence" value="ECO:0000250"/>
    <property type="project" value="AgBase"/>
</dbReference>
<dbReference type="GO" id="GO:0002070">
    <property type="term" value="P:epithelial cell maturation"/>
    <property type="evidence" value="ECO:0000250"/>
    <property type="project" value="AgBase"/>
</dbReference>
<dbReference type="GO" id="GO:0000132">
    <property type="term" value="P:establishment of mitotic spindle orientation"/>
    <property type="evidence" value="ECO:0007669"/>
    <property type="project" value="Ensembl"/>
</dbReference>
<dbReference type="GO" id="GO:0007507">
    <property type="term" value="P:heart development"/>
    <property type="evidence" value="ECO:0000250"/>
    <property type="project" value="AgBase"/>
</dbReference>
<dbReference type="GO" id="GO:0001947">
    <property type="term" value="P:heart looping"/>
    <property type="evidence" value="ECO:0000250"/>
    <property type="project" value="AgBase"/>
</dbReference>
<dbReference type="GO" id="GO:0001701">
    <property type="term" value="P:in utero embryonic development"/>
    <property type="evidence" value="ECO:0000250"/>
    <property type="project" value="AgBase"/>
</dbReference>
<dbReference type="GO" id="GO:0099111">
    <property type="term" value="P:microtubule-based transport"/>
    <property type="evidence" value="ECO:0000250"/>
    <property type="project" value="UniProtKB"/>
</dbReference>
<dbReference type="GO" id="GO:0030308">
    <property type="term" value="P:negative regulation of cell growth"/>
    <property type="evidence" value="ECO:0000250"/>
    <property type="project" value="UniProtKB"/>
</dbReference>
<dbReference type="GO" id="GO:0008285">
    <property type="term" value="P:negative regulation of cell population proliferation"/>
    <property type="evidence" value="ECO:0000250"/>
    <property type="project" value="AgBase"/>
</dbReference>
<dbReference type="GO" id="GO:0032277">
    <property type="term" value="P:negative regulation of gonadotropin secretion"/>
    <property type="evidence" value="ECO:0007669"/>
    <property type="project" value="Ensembl"/>
</dbReference>
<dbReference type="GO" id="GO:1901164">
    <property type="term" value="P:negative regulation of trophoblast cell migration"/>
    <property type="evidence" value="ECO:0007669"/>
    <property type="project" value="Ensembl"/>
</dbReference>
<dbReference type="GO" id="GO:0001764">
    <property type="term" value="P:neuron migration"/>
    <property type="evidence" value="ECO:0000250"/>
    <property type="project" value="AgBase"/>
</dbReference>
<dbReference type="GO" id="GO:0048812">
    <property type="term" value="P:neuron projection morphogenesis"/>
    <property type="evidence" value="ECO:0000250"/>
    <property type="project" value="AgBase"/>
</dbReference>
<dbReference type="GO" id="GO:0043123">
    <property type="term" value="P:positive regulation of canonical NF-kappaB signal transduction"/>
    <property type="evidence" value="ECO:0000250"/>
    <property type="project" value="AgBase"/>
</dbReference>
<dbReference type="GO" id="GO:0010628">
    <property type="term" value="P:positive regulation of gene expression"/>
    <property type="evidence" value="ECO:0007669"/>
    <property type="project" value="Ensembl"/>
</dbReference>
<dbReference type="GO" id="GO:1905772">
    <property type="term" value="P:positive regulation of mesodermal cell differentiation"/>
    <property type="evidence" value="ECO:0007669"/>
    <property type="project" value="Ensembl"/>
</dbReference>
<dbReference type="GO" id="GO:1905332">
    <property type="term" value="P:positive regulation of morphogenesis of an epithelium"/>
    <property type="evidence" value="ECO:0007669"/>
    <property type="project" value="Ensembl"/>
</dbReference>
<dbReference type="GO" id="GO:0045732">
    <property type="term" value="P:positive regulation of protein catabolic process"/>
    <property type="evidence" value="ECO:0000250"/>
    <property type="project" value="AgBase"/>
</dbReference>
<dbReference type="GO" id="GO:2000648">
    <property type="term" value="P:positive regulation of stem cell proliferation"/>
    <property type="evidence" value="ECO:0007669"/>
    <property type="project" value="Ensembl"/>
</dbReference>
<dbReference type="GO" id="GO:0045844">
    <property type="term" value="P:positive regulation of striated muscle tissue development"/>
    <property type="evidence" value="ECO:0000250"/>
    <property type="project" value="AgBase"/>
</dbReference>
<dbReference type="GO" id="GO:1904707">
    <property type="term" value="P:positive regulation of vascular associated smooth muscle cell proliferation"/>
    <property type="evidence" value="ECO:0007669"/>
    <property type="project" value="Ensembl"/>
</dbReference>
<dbReference type="GO" id="GO:0051259">
    <property type="term" value="P:protein complex oligomerization"/>
    <property type="evidence" value="ECO:0000250"/>
    <property type="project" value="AgBase"/>
</dbReference>
<dbReference type="GO" id="GO:0008104">
    <property type="term" value="P:protein localization"/>
    <property type="evidence" value="ECO:0007669"/>
    <property type="project" value="Ensembl"/>
</dbReference>
<dbReference type="GO" id="GO:0042981">
    <property type="term" value="P:regulation of apoptotic process"/>
    <property type="evidence" value="ECO:0000250"/>
    <property type="project" value="UniProtKB"/>
</dbReference>
<dbReference type="GO" id="GO:0008016">
    <property type="term" value="P:regulation of heart contraction"/>
    <property type="evidence" value="ECO:0000250"/>
    <property type="project" value="AgBase"/>
</dbReference>
<dbReference type="GO" id="GO:0009268">
    <property type="term" value="P:response to pH"/>
    <property type="evidence" value="ECO:0000250"/>
    <property type="project" value="AgBase"/>
</dbReference>
<dbReference type="GO" id="GO:0007165">
    <property type="term" value="P:signal transduction"/>
    <property type="evidence" value="ECO:0007669"/>
    <property type="project" value="Ensembl"/>
</dbReference>
<dbReference type="GO" id="GO:0043403">
    <property type="term" value="P:skeletal muscle tissue regeneration"/>
    <property type="evidence" value="ECO:0000250"/>
    <property type="project" value="AgBase"/>
</dbReference>
<dbReference type="GO" id="GO:0007283">
    <property type="term" value="P:spermatogenesis"/>
    <property type="evidence" value="ECO:0000250"/>
    <property type="project" value="UniProtKB"/>
</dbReference>
<dbReference type="FunFam" id="1.20.1440.80:FF:000001">
    <property type="entry name" value="Gap junction alpha-1"/>
    <property type="match status" value="1"/>
</dbReference>
<dbReference type="FunFam" id="1.20.5.1130:FF:000001">
    <property type="entry name" value="Gap junction alpha-1"/>
    <property type="match status" value="1"/>
</dbReference>
<dbReference type="Gene3D" id="1.20.5.1130">
    <property type="entry name" value="Connexin43"/>
    <property type="match status" value="1"/>
</dbReference>
<dbReference type="Gene3D" id="1.20.1440.80">
    <property type="entry name" value="Gap junction channel protein cysteine-rich domain"/>
    <property type="match status" value="1"/>
</dbReference>
<dbReference type="InterPro" id="IPR035091">
    <property type="entry name" value="Alpha_helix_dom_sf"/>
</dbReference>
<dbReference type="InterPro" id="IPR000500">
    <property type="entry name" value="Connexin"/>
</dbReference>
<dbReference type="InterPro" id="IPR002261">
    <property type="entry name" value="Connexin43"/>
</dbReference>
<dbReference type="InterPro" id="IPR013124">
    <property type="entry name" value="Connexin43_C"/>
</dbReference>
<dbReference type="InterPro" id="IPR034634">
    <property type="entry name" value="Connexin_C"/>
</dbReference>
<dbReference type="InterPro" id="IPR019570">
    <property type="entry name" value="Connexin_CCC"/>
</dbReference>
<dbReference type="InterPro" id="IPR017990">
    <property type="entry name" value="Connexin_CS"/>
</dbReference>
<dbReference type="InterPro" id="IPR013092">
    <property type="entry name" value="Connexin_N"/>
</dbReference>
<dbReference type="InterPro" id="IPR038359">
    <property type="entry name" value="Connexin_N_sf"/>
</dbReference>
<dbReference type="PANTHER" id="PTHR11984">
    <property type="entry name" value="CONNEXIN"/>
    <property type="match status" value="1"/>
</dbReference>
<dbReference type="PANTHER" id="PTHR11984:SF33">
    <property type="entry name" value="GAP JUNCTION ALPHA-1 PROTEIN"/>
    <property type="match status" value="1"/>
</dbReference>
<dbReference type="Pfam" id="PF00029">
    <property type="entry name" value="Connexin"/>
    <property type="match status" value="1"/>
</dbReference>
<dbReference type="Pfam" id="PF03508">
    <property type="entry name" value="Connexin43"/>
    <property type="match status" value="1"/>
</dbReference>
<dbReference type="PRINTS" id="PR00206">
    <property type="entry name" value="CONNEXIN"/>
</dbReference>
<dbReference type="PRINTS" id="PR01132">
    <property type="entry name" value="CONNEXINA1"/>
</dbReference>
<dbReference type="SMART" id="SM00037">
    <property type="entry name" value="CNX"/>
    <property type="match status" value="1"/>
</dbReference>
<dbReference type="SMART" id="SM01089">
    <property type="entry name" value="Connexin_CCC"/>
    <property type="match status" value="1"/>
</dbReference>
<dbReference type="SUPFAM" id="SSF118220">
    <property type="entry name" value="Connexin43"/>
    <property type="match status" value="1"/>
</dbReference>
<dbReference type="PROSITE" id="PS00407">
    <property type="entry name" value="CONNEXINS_1"/>
    <property type="match status" value="1"/>
</dbReference>
<dbReference type="PROSITE" id="PS00408">
    <property type="entry name" value="CONNEXINS_2"/>
    <property type="match status" value="1"/>
</dbReference>
<gene>
    <name type="primary">GJA1</name>
</gene>
<sequence>MGDWSALGKLLDKVQAYSTAGGKVWLSVLFIFRILLLGTAVESAWGDEQSAFRCNTQQPGCENVCYDKSFPISHVRFWVLQIIFVSVPTLLYLAHVFYVMRKEEKLNKKEEELKVVAQTDGANVDMHLKQIEIKKFKYGIEEHGKVKMRGGLLRTYIISILFKSVFEVAFLLIQWYIYGFSLSAVYTCKRDPCPHQVDCFLSRPTEKTIFIIFMLVVSLVSLALNIIELFYVFFKGVKDRVKGKSDPYHTTTGPLSPSKDCGSPKYAYFNGCSSPTAPLSPMSPPGYKLVTGDRNNSSCRNYNKQASEQNWANYSAEQNRMGQAGSTISNSHAQPFDFPDDHQNSKKLDAGHELQPLAIVDQRPSSRASSRASSRPRPDDLEI</sequence>
<evidence type="ECO:0000250" key="1">
    <source>
        <dbReference type="UniProtKB" id="P08050"/>
    </source>
</evidence>
<evidence type="ECO:0000250" key="2">
    <source>
        <dbReference type="UniProtKB" id="P17302"/>
    </source>
</evidence>
<evidence type="ECO:0000250" key="3">
    <source>
        <dbReference type="UniProtKB" id="P23242"/>
    </source>
</evidence>
<evidence type="ECO:0000250" key="4">
    <source>
        <dbReference type="UniProtKB" id="Q6TYA7"/>
    </source>
</evidence>
<evidence type="ECO:0000255" key="5"/>
<evidence type="ECO:0000256" key="6">
    <source>
        <dbReference type="SAM" id="MobiDB-lite"/>
    </source>
</evidence>
<evidence type="ECO:0000305" key="7"/>
<accession>P18246</accession>
<accession>Q2KJ91</accession>
<protein>
    <recommendedName>
        <fullName>Gap junction alpha-1 protein</fullName>
    </recommendedName>
    <alternativeName>
        <fullName>Connexin-43</fullName>
        <shortName>Cx43</shortName>
    </alternativeName>
    <alternativeName>
        <fullName>Vascular smooth muscle connexin-43</fullName>
    </alternativeName>
</protein>
<feature type="initiator methionine" description="Removed" evidence="1">
    <location>
        <position position="1"/>
    </location>
</feature>
<feature type="chain" id="PRO_0000057799" description="Gap junction alpha-1 protein">
    <location>
        <begin position="2"/>
        <end position="383"/>
    </location>
</feature>
<feature type="topological domain" description="Cytoplasmic" evidence="1">
    <location>
        <begin position="2"/>
        <end position="23"/>
    </location>
</feature>
<feature type="transmembrane region" description="Helical" evidence="5">
    <location>
        <begin position="24"/>
        <end position="44"/>
    </location>
</feature>
<feature type="topological domain" description="Extracellular" evidence="1">
    <location>
        <begin position="45"/>
        <end position="76"/>
    </location>
</feature>
<feature type="transmembrane region" description="Helical" evidence="5">
    <location>
        <begin position="77"/>
        <end position="97"/>
    </location>
</feature>
<feature type="topological domain" description="Cytoplasmic" evidence="1">
    <location>
        <begin position="98"/>
        <end position="156"/>
    </location>
</feature>
<feature type="transmembrane region" description="Helical" evidence="5">
    <location>
        <begin position="157"/>
        <end position="177"/>
    </location>
</feature>
<feature type="topological domain" description="Extracellular" evidence="1">
    <location>
        <begin position="178"/>
        <end position="208"/>
    </location>
</feature>
<feature type="transmembrane region" description="Helical" evidence="5">
    <location>
        <begin position="209"/>
        <end position="229"/>
    </location>
</feature>
<feature type="topological domain" description="Cytoplasmic" evidence="1">
    <location>
        <begin position="230"/>
        <end position="383"/>
    </location>
</feature>
<feature type="region of interest" description="Interaction with NOV" evidence="1">
    <location>
        <begin position="245"/>
        <end position="383"/>
    </location>
</feature>
<feature type="region of interest" description="Interaction with UBQLN4" evidence="3">
    <location>
        <begin position="265"/>
        <end position="383"/>
    </location>
</feature>
<feature type="region of interest" description="Disordered" evidence="6">
    <location>
        <begin position="318"/>
        <end position="383"/>
    </location>
</feature>
<feature type="compositionally biased region" description="Polar residues" evidence="6">
    <location>
        <begin position="318"/>
        <end position="333"/>
    </location>
</feature>
<feature type="compositionally biased region" description="Basic and acidic residues" evidence="6">
    <location>
        <begin position="339"/>
        <end position="352"/>
    </location>
</feature>
<feature type="compositionally biased region" description="Low complexity" evidence="6">
    <location>
        <begin position="363"/>
        <end position="375"/>
    </location>
</feature>
<feature type="modified residue" description="Phosphoserine" evidence="1">
    <location>
        <position position="5"/>
    </location>
</feature>
<feature type="modified residue" description="Phosphotyrosine" evidence="3">
    <location>
        <position position="248"/>
    </location>
</feature>
<feature type="modified residue" description="Phosphoserine" evidence="2">
    <location>
        <position position="256"/>
    </location>
</feature>
<feature type="modified residue" description="Phosphoserine" evidence="1">
    <location>
        <position position="258"/>
    </location>
</feature>
<feature type="modified residue" description="Phosphoserine" evidence="2">
    <location>
        <position position="263"/>
    </location>
</feature>
<feature type="modified residue" description="S-nitrosocysteine" evidence="3">
    <location>
        <position position="272"/>
    </location>
</feature>
<feature type="modified residue" description="Phosphothreonine" evidence="3">
    <location>
        <position position="276"/>
    </location>
</feature>
<feature type="modified residue" description="Phosphoserine" evidence="3">
    <location>
        <position position="307"/>
    </location>
</feature>
<feature type="modified residue" description="Phosphoserine" evidence="2">
    <location>
        <position position="315"/>
    </location>
</feature>
<feature type="modified residue" description="Phosphoserine; by CK1" evidence="2">
    <location>
        <position position="326"/>
    </location>
</feature>
<feature type="modified residue" description="Phosphothreonine" evidence="3">
    <location>
        <position position="327"/>
    </location>
</feature>
<feature type="modified residue" description="Phosphoserine; by CK1" evidence="2">
    <location>
        <position position="329"/>
    </location>
</feature>
<feature type="modified residue" description="Phosphoserine; by CK1" evidence="2">
    <location>
        <position position="331"/>
    </location>
</feature>
<feature type="modified residue" description="Phosphoserine" evidence="2">
    <location>
        <position position="345"/>
    </location>
</feature>
<feature type="modified residue" description="Phosphoserine" evidence="3">
    <location>
        <position position="366"/>
    </location>
</feature>
<feature type="modified residue" description="Phosphoserine; by PKC/PRKCG and PKC/PRKCD" evidence="3">
    <location>
        <position position="369"/>
    </location>
</feature>
<feature type="modified residue" description="Phosphoserine" evidence="3">
    <location>
        <position position="370"/>
    </location>
</feature>
<feature type="modified residue" description="Phosphoserine" evidence="1">
    <location>
        <position position="374"/>
    </location>
</feature>
<feature type="disulfide bond" evidence="2">
    <location>
        <begin position="54"/>
        <end position="193"/>
    </location>
</feature>
<feature type="disulfide bond" evidence="2">
    <location>
        <begin position="188"/>
        <end position="199"/>
    </location>
</feature>
<feature type="cross-link" description="Glycyl lysine isopeptide (Lys-Gly) (interchain with G-Cter in SUMO)" evidence="2">
    <location>
        <position position="145"/>
    </location>
</feature>
<feature type="cross-link" description="Glycyl lysine isopeptide (Lys-Gly) (interchain with G-Cter in SUMO)" evidence="2">
    <location>
        <position position="238"/>
    </location>
</feature>